<protein>
    <recommendedName>
        <fullName>Glucose-induced degradation protein 8 homolog</fullName>
    </recommendedName>
    <alternativeName>
        <fullName>Two hybrid-associated protein 1 with RanBPM</fullName>
        <shortName evidence="6">Twa1</shortName>
    </alternativeName>
</protein>
<proteinExistence type="evidence at protein level"/>
<organism>
    <name type="scientific">Mus musculus</name>
    <name type="common">Mouse</name>
    <dbReference type="NCBI Taxonomy" id="10090"/>
    <lineage>
        <taxon>Eukaryota</taxon>
        <taxon>Metazoa</taxon>
        <taxon>Chordata</taxon>
        <taxon>Craniata</taxon>
        <taxon>Vertebrata</taxon>
        <taxon>Euteleostomi</taxon>
        <taxon>Mammalia</taxon>
        <taxon>Eutheria</taxon>
        <taxon>Euarchontoglires</taxon>
        <taxon>Glires</taxon>
        <taxon>Rodentia</taxon>
        <taxon>Myomorpha</taxon>
        <taxon>Muroidea</taxon>
        <taxon>Muridae</taxon>
        <taxon>Murinae</taxon>
        <taxon>Mus</taxon>
        <taxon>Mus</taxon>
    </lineage>
</organism>
<feature type="chain" id="PRO_0000079412" description="Glucose-induced degradation protein 8 homolog">
    <location>
        <begin position="1"/>
        <end position="228"/>
    </location>
</feature>
<feature type="domain" description="LisH" evidence="3">
    <location>
        <begin position="25"/>
        <end position="57"/>
    </location>
</feature>
<feature type="domain" description="CTLH" evidence="2">
    <location>
        <begin position="63"/>
        <end position="120"/>
    </location>
</feature>
<feature type="region of interest" description="Interaction with CTNNB1" evidence="1">
    <location>
        <begin position="116"/>
        <end position="212"/>
    </location>
</feature>
<sequence length="228" mass="26779">MSYAEKPDEITKDEWMEKLNNLHVQRADMNRLIMNYLVTEGFKEAAEKFRMESGIEPSVDLETLDERIKIREMILKGQIQEAIALINSLHPELLDTNRYLYFHLQQQHLIELIRQRETEAALEFAQTQLAEQGEESRECLTEMERTLALLAFDSPEESPFGDLLHMMQRQKVWSEVNQAVLDYENRESTPKLAKLLKLLLWAQNELDQKKVKYPKMTDLSKGVIEEPK</sequence>
<comment type="function">
    <text evidence="1">Core component of the CTLH E3 ubiquitin-protein ligase complex that selectively accepts ubiquitin from UBE2H and mediates ubiquitination and subsequent proteasomal degradation of the transcription factor HBP1. Acts as a positive regulator of Wnt signaling pathway by promoting beta-catenin (CTNNB1) nuclear accumulation.</text>
</comment>
<comment type="subunit">
    <text evidence="1 5">Homodimer; may also form higher oligomers (PubMed:27920276). Identified in the CTLH complex that contains GID4, RANBP9 and/or RANBP10, MKLN1, MAEA, RMND5A (or alternatively its paralog RMND5B), GID8, ARMC8, WDR26 and YPEL5. Within this complex, MAEA, RMND5A (or alternatively its paralog RMND5B), GID8, WDR26, and RANBP9 and/or RANBP10 form the catalytic core, while GID4, MKLN1, ARMC8 and YPEL5 have ancillary roles. Interacts with RANBP9. Part of a complex consisting of RANBP9, MKLN1 and GID8. Interacts with CTNNB1, AXIN1 and GSK3B (By similarity).</text>
</comment>
<comment type="subcellular location">
    <subcellularLocation>
        <location evidence="1">Cytoplasm</location>
    </subcellularLocation>
    <subcellularLocation>
        <location evidence="1">Nucleus</location>
    </subcellularLocation>
    <text evidence="1">Localizes in the cytoplasm in the absence of Wnt stimulation and in the nucleus in the presence of Wnt stimulation.</text>
</comment>
<comment type="tissue specificity">
    <text evidence="4">Ubiquitous.</text>
</comment>
<comment type="PTM">
    <text evidence="1">Polyubiquitinated through 'Lys-48'-polyubiquitin chains, leading to proteasomal degradation in the absence of Wnt stimulation.</text>
</comment>
<comment type="similarity">
    <text evidence="7">Belongs to the GID8 family.</text>
</comment>
<reference key="1">
    <citation type="journal article" date="2005" name="Science">
        <title>The transcriptional landscape of the mammalian genome.</title>
        <authorList>
            <person name="Carninci P."/>
            <person name="Kasukawa T."/>
            <person name="Katayama S."/>
            <person name="Gough J."/>
            <person name="Frith M.C."/>
            <person name="Maeda N."/>
            <person name="Oyama R."/>
            <person name="Ravasi T."/>
            <person name="Lenhard B."/>
            <person name="Wells C."/>
            <person name="Kodzius R."/>
            <person name="Shimokawa K."/>
            <person name="Bajic V.B."/>
            <person name="Brenner S.E."/>
            <person name="Batalov S."/>
            <person name="Forrest A.R."/>
            <person name="Zavolan M."/>
            <person name="Davis M.J."/>
            <person name="Wilming L.G."/>
            <person name="Aidinis V."/>
            <person name="Allen J.E."/>
            <person name="Ambesi-Impiombato A."/>
            <person name="Apweiler R."/>
            <person name="Aturaliya R.N."/>
            <person name="Bailey T.L."/>
            <person name="Bansal M."/>
            <person name="Baxter L."/>
            <person name="Beisel K.W."/>
            <person name="Bersano T."/>
            <person name="Bono H."/>
            <person name="Chalk A.M."/>
            <person name="Chiu K.P."/>
            <person name="Choudhary V."/>
            <person name="Christoffels A."/>
            <person name="Clutterbuck D.R."/>
            <person name="Crowe M.L."/>
            <person name="Dalla E."/>
            <person name="Dalrymple B.P."/>
            <person name="de Bono B."/>
            <person name="Della Gatta G."/>
            <person name="di Bernardo D."/>
            <person name="Down T."/>
            <person name="Engstrom P."/>
            <person name="Fagiolini M."/>
            <person name="Faulkner G."/>
            <person name="Fletcher C.F."/>
            <person name="Fukushima T."/>
            <person name="Furuno M."/>
            <person name="Futaki S."/>
            <person name="Gariboldi M."/>
            <person name="Georgii-Hemming P."/>
            <person name="Gingeras T.R."/>
            <person name="Gojobori T."/>
            <person name="Green R.E."/>
            <person name="Gustincich S."/>
            <person name="Harbers M."/>
            <person name="Hayashi Y."/>
            <person name="Hensch T.K."/>
            <person name="Hirokawa N."/>
            <person name="Hill D."/>
            <person name="Huminiecki L."/>
            <person name="Iacono M."/>
            <person name="Ikeo K."/>
            <person name="Iwama A."/>
            <person name="Ishikawa T."/>
            <person name="Jakt M."/>
            <person name="Kanapin A."/>
            <person name="Katoh M."/>
            <person name="Kawasawa Y."/>
            <person name="Kelso J."/>
            <person name="Kitamura H."/>
            <person name="Kitano H."/>
            <person name="Kollias G."/>
            <person name="Krishnan S.P."/>
            <person name="Kruger A."/>
            <person name="Kummerfeld S.K."/>
            <person name="Kurochkin I.V."/>
            <person name="Lareau L.F."/>
            <person name="Lazarevic D."/>
            <person name="Lipovich L."/>
            <person name="Liu J."/>
            <person name="Liuni S."/>
            <person name="McWilliam S."/>
            <person name="Madan Babu M."/>
            <person name="Madera M."/>
            <person name="Marchionni L."/>
            <person name="Matsuda H."/>
            <person name="Matsuzawa S."/>
            <person name="Miki H."/>
            <person name="Mignone F."/>
            <person name="Miyake S."/>
            <person name="Morris K."/>
            <person name="Mottagui-Tabar S."/>
            <person name="Mulder N."/>
            <person name="Nakano N."/>
            <person name="Nakauchi H."/>
            <person name="Ng P."/>
            <person name="Nilsson R."/>
            <person name="Nishiguchi S."/>
            <person name="Nishikawa S."/>
            <person name="Nori F."/>
            <person name="Ohara O."/>
            <person name="Okazaki Y."/>
            <person name="Orlando V."/>
            <person name="Pang K.C."/>
            <person name="Pavan W.J."/>
            <person name="Pavesi G."/>
            <person name="Pesole G."/>
            <person name="Petrovsky N."/>
            <person name="Piazza S."/>
            <person name="Reed J."/>
            <person name="Reid J.F."/>
            <person name="Ring B.Z."/>
            <person name="Ringwald M."/>
            <person name="Rost B."/>
            <person name="Ruan Y."/>
            <person name="Salzberg S.L."/>
            <person name="Sandelin A."/>
            <person name="Schneider C."/>
            <person name="Schoenbach C."/>
            <person name="Sekiguchi K."/>
            <person name="Semple C.A."/>
            <person name="Seno S."/>
            <person name="Sessa L."/>
            <person name="Sheng Y."/>
            <person name="Shibata Y."/>
            <person name="Shimada H."/>
            <person name="Shimada K."/>
            <person name="Silva D."/>
            <person name="Sinclair B."/>
            <person name="Sperling S."/>
            <person name="Stupka E."/>
            <person name="Sugiura K."/>
            <person name="Sultana R."/>
            <person name="Takenaka Y."/>
            <person name="Taki K."/>
            <person name="Tammoja K."/>
            <person name="Tan S.L."/>
            <person name="Tang S."/>
            <person name="Taylor M.S."/>
            <person name="Tegner J."/>
            <person name="Teichmann S.A."/>
            <person name="Ueda H.R."/>
            <person name="van Nimwegen E."/>
            <person name="Verardo R."/>
            <person name="Wei C.L."/>
            <person name="Yagi K."/>
            <person name="Yamanishi H."/>
            <person name="Zabarovsky E."/>
            <person name="Zhu S."/>
            <person name="Zimmer A."/>
            <person name="Hide W."/>
            <person name="Bult C."/>
            <person name="Grimmond S.M."/>
            <person name="Teasdale R.D."/>
            <person name="Liu E.T."/>
            <person name="Brusic V."/>
            <person name="Quackenbush J."/>
            <person name="Wahlestedt C."/>
            <person name="Mattick J.S."/>
            <person name="Hume D.A."/>
            <person name="Kai C."/>
            <person name="Sasaki D."/>
            <person name="Tomaru Y."/>
            <person name="Fukuda S."/>
            <person name="Kanamori-Katayama M."/>
            <person name="Suzuki M."/>
            <person name="Aoki J."/>
            <person name="Arakawa T."/>
            <person name="Iida J."/>
            <person name="Imamura K."/>
            <person name="Itoh M."/>
            <person name="Kato T."/>
            <person name="Kawaji H."/>
            <person name="Kawagashira N."/>
            <person name="Kawashima T."/>
            <person name="Kojima M."/>
            <person name="Kondo S."/>
            <person name="Konno H."/>
            <person name="Nakano K."/>
            <person name="Ninomiya N."/>
            <person name="Nishio T."/>
            <person name="Okada M."/>
            <person name="Plessy C."/>
            <person name="Shibata K."/>
            <person name="Shiraki T."/>
            <person name="Suzuki S."/>
            <person name="Tagami M."/>
            <person name="Waki K."/>
            <person name="Watahiki A."/>
            <person name="Okamura-Oho Y."/>
            <person name="Suzuki H."/>
            <person name="Kawai J."/>
            <person name="Hayashizaki Y."/>
        </authorList>
    </citation>
    <scope>NUCLEOTIDE SEQUENCE [LARGE SCALE MRNA]</scope>
    <source>
        <strain>C57BL/6J</strain>
        <tissue>Tongue</tissue>
    </source>
</reference>
<reference key="2">
    <citation type="journal article" date="2004" name="Genome Res.">
        <title>The status, quality, and expansion of the NIH full-length cDNA project: the Mammalian Gene Collection (MGC).</title>
        <authorList>
            <consortium name="The MGC Project Team"/>
        </authorList>
    </citation>
    <scope>NUCLEOTIDE SEQUENCE [LARGE SCALE MRNA]</scope>
    <source>
        <strain>C57BL/6J</strain>
        <tissue>Brain</tissue>
    </source>
</reference>
<reference key="3">
    <citation type="journal article" date="2003" name="Gene">
        <title>A novel nuclear protein, Twa1, and Muskelin comprise a complex with RanBPM.</title>
        <authorList>
            <person name="Umeda M."/>
            <person name="Nishitani H."/>
            <person name="Nishimoto T."/>
        </authorList>
    </citation>
    <scope>TISSUE SPECIFICITY</scope>
</reference>
<reference key="4">
    <citation type="journal article" date="2010" name="Cell">
        <title>A tissue-specific atlas of mouse protein phosphorylation and expression.</title>
        <authorList>
            <person name="Huttlin E.L."/>
            <person name="Jedrychowski M.P."/>
            <person name="Elias J.E."/>
            <person name="Goswami T."/>
            <person name="Rad R."/>
            <person name="Beausoleil S.A."/>
            <person name="Villen J."/>
            <person name="Haas W."/>
            <person name="Sowa M.E."/>
            <person name="Gygi S.P."/>
        </authorList>
    </citation>
    <scope>IDENTIFICATION BY MASS SPECTROMETRY [LARGE SCALE ANALYSIS]</scope>
    <source>
        <tissue>Brain</tissue>
        <tissue>Brown adipose tissue</tissue>
        <tissue>Heart</tissue>
        <tissue>Kidney</tissue>
        <tissue>Liver</tissue>
        <tissue>Lung</tissue>
        <tissue>Pancreas</tissue>
        <tissue>Spleen</tissue>
        <tissue>Testis</tissue>
    </source>
</reference>
<reference key="5">
    <citation type="journal article" date="2017" name="Biosci. Rep.">
        <title>Studies of recombinant TWA1 reveal constitutive dimerization.</title>
        <authorList>
            <person name="Francis O."/>
            <person name="Baker G.E."/>
            <person name="Race P.R."/>
            <person name="Adams J.C."/>
        </authorList>
    </citation>
    <scope>SUBUNIT</scope>
</reference>
<accession>Q9D7M1</accession>
<keyword id="KW-0963">Cytoplasm</keyword>
<keyword id="KW-0539">Nucleus</keyword>
<keyword id="KW-1185">Reference proteome</keyword>
<keyword id="KW-0832">Ubl conjugation</keyword>
<keyword id="KW-0879">Wnt signaling pathway</keyword>
<gene>
    <name type="primary">Gid8</name>
</gene>
<evidence type="ECO:0000250" key="1">
    <source>
        <dbReference type="UniProtKB" id="Q9NWU2"/>
    </source>
</evidence>
<evidence type="ECO:0000255" key="2">
    <source>
        <dbReference type="PROSITE-ProRule" id="PRU00058"/>
    </source>
</evidence>
<evidence type="ECO:0000255" key="3">
    <source>
        <dbReference type="PROSITE-ProRule" id="PRU00126"/>
    </source>
</evidence>
<evidence type="ECO:0000269" key="4">
    <source>
    </source>
</evidence>
<evidence type="ECO:0000269" key="5">
    <source>
    </source>
</evidence>
<evidence type="ECO:0000303" key="6">
    <source>
    </source>
</evidence>
<evidence type="ECO:0000305" key="7"/>
<dbReference type="EMBL" id="AK009106">
    <property type="protein sequence ID" value="BAB26074.1"/>
    <property type="molecule type" value="mRNA"/>
</dbReference>
<dbReference type="EMBL" id="BC059022">
    <property type="protein sequence ID" value="AAH59022.1"/>
    <property type="molecule type" value="mRNA"/>
</dbReference>
<dbReference type="CCDS" id="CCDS17185.1"/>
<dbReference type="RefSeq" id="NP_001276580.1">
    <property type="nucleotide sequence ID" value="NM_001289651.1"/>
</dbReference>
<dbReference type="RefSeq" id="NP_001276581.1">
    <property type="nucleotide sequence ID" value="NM_001289652.1"/>
</dbReference>
<dbReference type="RefSeq" id="NP_083883.1">
    <property type="nucleotide sequence ID" value="NM_029607.2"/>
</dbReference>
<dbReference type="RefSeq" id="XP_030108051.1">
    <property type="nucleotide sequence ID" value="XM_030252191.2"/>
</dbReference>
<dbReference type="RefSeq" id="XP_036018562.1">
    <property type="nucleotide sequence ID" value="XM_036162669.1"/>
</dbReference>
<dbReference type="SMR" id="Q9D7M1"/>
<dbReference type="BioGRID" id="218123">
    <property type="interactions" value="2"/>
</dbReference>
<dbReference type="FunCoup" id="Q9D7M1">
    <property type="interactions" value="3932"/>
</dbReference>
<dbReference type="IntAct" id="Q9D7M1">
    <property type="interactions" value="1"/>
</dbReference>
<dbReference type="STRING" id="10090.ENSMUSP00000077753"/>
<dbReference type="iPTMnet" id="Q9D7M1"/>
<dbReference type="PhosphoSitePlus" id="Q9D7M1"/>
<dbReference type="SwissPalm" id="Q9D7M1"/>
<dbReference type="PaxDb" id="10090-ENSMUSP00000077753"/>
<dbReference type="PeptideAtlas" id="Q9D7M1"/>
<dbReference type="ProteomicsDB" id="267447"/>
<dbReference type="Pumba" id="Q9D7M1"/>
<dbReference type="Antibodypedia" id="29626">
    <property type="antibodies" value="144 antibodies from 28 providers"/>
</dbReference>
<dbReference type="DNASU" id="76425"/>
<dbReference type="Ensembl" id="ENSMUST00000029090.9">
    <property type="protein sequence ID" value="ENSMUSP00000029090.3"/>
    <property type="gene ID" value="ENSMUSG00000027573.12"/>
</dbReference>
<dbReference type="Ensembl" id="ENSMUST00000078687.6">
    <property type="protein sequence ID" value="ENSMUSP00000077753.6"/>
    <property type="gene ID" value="ENSMUSG00000027573.12"/>
</dbReference>
<dbReference type="GeneID" id="76425"/>
<dbReference type="KEGG" id="mmu:76425"/>
<dbReference type="UCSC" id="uc008ojy.2">
    <property type="organism name" value="mouse"/>
</dbReference>
<dbReference type="AGR" id="MGI:1923675"/>
<dbReference type="CTD" id="54994"/>
<dbReference type="MGI" id="MGI:1923675">
    <property type="gene designation" value="Gid8"/>
</dbReference>
<dbReference type="VEuPathDB" id="HostDB:ENSMUSG00000027573"/>
<dbReference type="eggNOG" id="KOG2659">
    <property type="taxonomic scope" value="Eukaryota"/>
</dbReference>
<dbReference type="GeneTree" id="ENSGT00390000015162"/>
<dbReference type="HOGENOM" id="CLU_073203_1_0_1"/>
<dbReference type="InParanoid" id="Q9D7M1"/>
<dbReference type="OMA" id="KMILWAQ"/>
<dbReference type="OrthoDB" id="2415936at2759"/>
<dbReference type="PhylomeDB" id="Q9D7M1"/>
<dbReference type="TreeFam" id="TF300176"/>
<dbReference type="Reactome" id="R-MMU-9861718">
    <property type="pathway name" value="Regulation of pyruvate metabolism"/>
</dbReference>
<dbReference type="BioGRID-ORCS" id="76425">
    <property type="hits" value="6 hits in 76 CRISPR screens"/>
</dbReference>
<dbReference type="ChiTaRS" id="Gid8">
    <property type="organism name" value="mouse"/>
</dbReference>
<dbReference type="PRO" id="PR:Q9D7M1"/>
<dbReference type="Proteomes" id="UP000000589">
    <property type="component" value="Chromosome 2"/>
</dbReference>
<dbReference type="RNAct" id="Q9D7M1">
    <property type="molecule type" value="protein"/>
</dbReference>
<dbReference type="Bgee" id="ENSMUSG00000027573">
    <property type="expression patterns" value="Expressed in interventricular septum and 230 other cell types or tissues"/>
</dbReference>
<dbReference type="GO" id="GO:0030054">
    <property type="term" value="C:cell junction"/>
    <property type="evidence" value="ECO:0007669"/>
    <property type="project" value="Ensembl"/>
</dbReference>
<dbReference type="GO" id="GO:0005829">
    <property type="term" value="C:cytosol"/>
    <property type="evidence" value="ECO:0000250"/>
    <property type="project" value="UniProtKB"/>
</dbReference>
<dbReference type="GO" id="GO:0005654">
    <property type="term" value="C:nucleoplasm"/>
    <property type="evidence" value="ECO:0007669"/>
    <property type="project" value="Ensembl"/>
</dbReference>
<dbReference type="GO" id="GO:0005634">
    <property type="term" value="C:nucleus"/>
    <property type="evidence" value="ECO:0000250"/>
    <property type="project" value="UniProtKB"/>
</dbReference>
<dbReference type="GO" id="GO:0000151">
    <property type="term" value="C:ubiquitin ligase complex"/>
    <property type="evidence" value="ECO:0007669"/>
    <property type="project" value="Ensembl"/>
</dbReference>
<dbReference type="GO" id="GO:0042803">
    <property type="term" value="F:protein homodimerization activity"/>
    <property type="evidence" value="ECO:0000314"/>
    <property type="project" value="UniProtKB"/>
</dbReference>
<dbReference type="GO" id="GO:0090263">
    <property type="term" value="P:positive regulation of canonical Wnt signaling pathway"/>
    <property type="evidence" value="ECO:0000250"/>
    <property type="project" value="UniProtKB"/>
</dbReference>
<dbReference type="GO" id="GO:0008284">
    <property type="term" value="P:positive regulation of cell population proliferation"/>
    <property type="evidence" value="ECO:0000250"/>
    <property type="project" value="UniProtKB"/>
</dbReference>
<dbReference type="GO" id="GO:0016055">
    <property type="term" value="P:Wnt signaling pathway"/>
    <property type="evidence" value="ECO:0007669"/>
    <property type="project" value="UniProtKB-KW"/>
</dbReference>
<dbReference type="InterPro" id="IPR013144">
    <property type="entry name" value="CRA_dom"/>
</dbReference>
<dbReference type="InterPro" id="IPR024964">
    <property type="entry name" value="CTLH/CRA"/>
</dbReference>
<dbReference type="InterPro" id="IPR006595">
    <property type="entry name" value="CTLH_C"/>
</dbReference>
<dbReference type="InterPro" id="IPR006594">
    <property type="entry name" value="LisH"/>
</dbReference>
<dbReference type="InterPro" id="IPR050618">
    <property type="entry name" value="Ubq-SigPath_Reg"/>
</dbReference>
<dbReference type="PANTHER" id="PTHR12864">
    <property type="entry name" value="RAN BINDING PROTEIN 9-RELATED"/>
    <property type="match status" value="1"/>
</dbReference>
<dbReference type="Pfam" id="PF10607">
    <property type="entry name" value="CTLH"/>
    <property type="match status" value="1"/>
</dbReference>
<dbReference type="Pfam" id="PF08513">
    <property type="entry name" value="LisH"/>
    <property type="match status" value="1"/>
</dbReference>
<dbReference type="SMART" id="SM00757">
    <property type="entry name" value="CRA"/>
    <property type="match status" value="1"/>
</dbReference>
<dbReference type="SMART" id="SM00668">
    <property type="entry name" value="CTLH"/>
    <property type="match status" value="1"/>
</dbReference>
<dbReference type="SMART" id="SM00667">
    <property type="entry name" value="LisH"/>
    <property type="match status" value="1"/>
</dbReference>
<dbReference type="PROSITE" id="PS50897">
    <property type="entry name" value="CTLH"/>
    <property type="match status" value="1"/>
</dbReference>
<dbReference type="PROSITE" id="PS50896">
    <property type="entry name" value="LISH"/>
    <property type="match status" value="1"/>
</dbReference>
<name>GID8_MOUSE</name>